<comment type="function">
    <text evidence="1">Pyrophosphatase that catalyzes the hydrolysis of nucleoside triphosphates to their monophosphate derivatives, with a high preference for the non-canonical purine nucleotides XTP (xanthosine triphosphate), dITP (deoxyinosine triphosphate) and ITP. Seems to function as a house-cleaning enzyme that removes non-canonical purine nucleotides from the nucleotide pool, thus preventing their incorporation into DNA/RNA and avoiding chromosomal lesions.</text>
</comment>
<comment type="catalytic activity">
    <reaction evidence="1">
        <text>XTP + H2O = XMP + diphosphate + H(+)</text>
        <dbReference type="Rhea" id="RHEA:28610"/>
        <dbReference type="ChEBI" id="CHEBI:15377"/>
        <dbReference type="ChEBI" id="CHEBI:15378"/>
        <dbReference type="ChEBI" id="CHEBI:33019"/>
        <dbReference type="ChEBI" id="CHEBI:57464"/>
        <dbReference type="ChEBI" id="CHEBI:61314"/>
        <dbReference type="EC" id="3.6.1.66"/>
    </reaction>
</comment>
<comment type="catalytic activity">
    <reaction evidence="1">
        <text>dITP + H2O = dIMP + diphosphate + H(+)</text>
        <dbReference type="Rhea" id="RHEA:28342"/>
        <dbReference type="ChEBI" id="CHEBI:15377"/>
        <dbReference type="ChEBI" id="CHEBI:15378"/>
        <dbReference type="ChEBI" id="CHEBI:33019"/>
        <dbReference type="ChEBI" id="CHEBI:61194"/>
        <dbReference type="ChEBI" id="CHEBI:61382"/>
        <dbReference type="EC" id="3.6.1.66"/>
    </reaction>
</comment>
<comment type="catalytic activity">
    <reaction evidence="1">
        <text>ITP + H2O = IMP + diphosphate + H(+)</text>
        <dbReference type="Rhea" id="RHEA:29399"/>
        <dbReference type="ChEBI" id="CHEBI:15377"/>
        <dbReference type="ChEBI" id="CHEBI:15378"/>
        <dbReference type="ChEBI" id="CHEBI:33019"/>
        <dbReference type="ChEBI" id="CHEBI:58053"/>
        <dbReference type="ChEBI" id="CHEBI:61402"/>
        <dbReference type="EC" id="3.6.1.66"/>
    </reaction>
</comment>
<comment type="cofactor">
    <cofactor evidence="1">
        <name>Mg(2+)</name>
        <dbReference type="ChEBI" id="CHEBI:18420"/>
    </cofactor>
    <text evidence="1">Binds 1 Mg(2+) ion per subunit.</text>
</comment>
<comment type="subunit">
    <text evidence="1">Homodimer.</text>
</comment>
<comment type="similarity">
    <text evidence="1">Belongs to the HAM1 NTPase family.</text>
</comment>
<proteinExistence type="inferred from homology"/>
<gene>
    <name type="ordered locus">Pnap_0815</name>
</gene>
<feature type="chain" id="PRO_1000068430" description="dITP/XTP pyrophosphatase">
    <location>
        <begin position="1"/>
        <end position="202"/>
    </location>
</feature>
<feature type="active site" description="Proton acceptor" evidence="1">
    <location>
        <position position="68"/>
    </location>
</feature>
<feature type="binding site" evidence="1">
    <location>
        <begin position="7"/>
        <end position="12"/>
    </location>
    <ligand>
        <name>substrate</name>
    </ligand>
</feature>
<feature type="binding site" evidence="1">
    <location>
        <position position="39"/>
    </location>
    <ligand>
        <name>Mg(2+)</name>
        <dbReference type="ChEBI" id="CHEBI:18420"/>
    </ligand>
</feature>
<feature type="binding site" evidence="1">
    <location>
        <position position="68"/>
    </location>
    <ligand>
        <name>Mg(2+)</name>
        <dbReference type="ChEBI" id="CHEBI:18420"/>
    </ligand>
</feature>
<feature type="binding site" evidence="1">
    <location>
        <position position="69"/>
    </location>
    <ligand>
        <name>substrate</name>
    </ligand>
</feature>
<feature type="binding site" evidence="1">
    <location>
        <begin position="157"/>
        <end position="160"/>
    </location>
    <ligand>
        <name>substrate</name>
    </ligand>
</feature>
<feature type="binding site" evidence="1">
    <location>
        <position position="180"/>
    </location>
    <ligand>
        <name>substrate</name>
    </ligand>
</feature>
<feature type="binding site" evidence="1">
    <location>
        <begin position="185"/>
        <end position="186"/>
    </location>
    <ligand>
        <name>substrate</name>
    </ligand>
</feature>
<dbReference type="EC" id="3.6.1.66" evidence="1"/>
<dbReference type="EMBL" id="CP000529">
    <property type="protein sequence ID" value="ABM36134.1"/>
    <property type="molecule type" value="Genomic_DNA"/>
</dbReference>
<dbReference type="RefSeq" id="WP_011800229.1">
    <property type="nucleotide sequence ID" value="NC_008781.1"/>
</dbReference>
<dbReference type="SMR" id="A1VKF6"/>
<dbReference type="STRING" id="365044.Pnap_0815"/>
<dbReference type="KEGG" id="pna:Pnap_0815"/>
<dbReference type="eggNOG" id="COG0127">
    <property type="taxonomic scope" value="Bacteria"/>
</dbReference>
<dbReference type="HOGENOM" id="CLU_082080_0_3_4"/>
<dbReference type="OrthoDB" id="9807456at2"/>
<dbReference type="Proteomes" id="UP000000644">
    <property type="component" value="Chromosome"/>
</dbReference>
<dbReference type="GO" id="GO:0005829">
    <property type="term" value="C:cytosol"/>
    <property type="evidence" value="ECO:0007669"/>
    <property type="project" value="TreeGrafter"/>
</dbReference>
<dbReference type="GO" id="GO:0035870">
    <property type="term" value="F:dITP diphosphatase activity"/>
    <property type="evidence" value="ECO:0007669"/>
    <property type="project" value="RHEA"/>
</dbReference>
<dbReference type="GO" id="GO:0036220">
    <property type="term" value="F:ITP diphosphatase activity"/>
    <property type="evidence" value="ECO:0007669"/>
    <property type="project" value="UniProtKB-EC"/>
</dbReference>
<dbReference type="GO" id="GO:0046872">
    <property type="term" value="F:metal ion binding"/>
    <property type="evidence" value="ECO:0007669"/>
    <property type="project" value="UniProtKB-KW"/>
</dbReference>
<dbReference type="GO" id="GO:0000166">
    <property type="term" value="F:nucleotide binding"/>
    <property type="evidence" value="ECO:0007669"/>
    <property type="project" value="UniProtKB-KW"/>
</dbReference>
<dbReference type="GO" id="GO:0017111">
    <property type="term" value="F:ribonucleoside triphosphate phosphatase activity"/>
    <property type="evidence" value="ECO:0007669"/>
    <property type="project" value="InterPro"/>
</dbReference>
<dbReference type="GO" id="GO:0036222">
    <property type="term" value="F:XTP diphosphatase activity"/>
    <property type="evidence" value="ECO:0007669"/>
    <property type="project" value="RHEA"/>
</dbReference>
<dbReference type="GO" id="GO:0009117">
    <property type="term" value="P:nucleotide metabolic process"/>
    <property type="evidence" value="ECO:0007669"/>
    <property type="project" value="UniProtKB-KW"/>
</dbReference>
<dbReference type="GO" id="GO:0009146">
    <property type="term" value="P:purine nucleoside triphosphate catabolic process"/>
    <property type="evidence" value="ECO:0007669"/>
    <property type="project" value="UniProtKB-UniRule"/>
</dbReference>
<dbReference type="CDD" id="cd00515">
    <property type="entry name" value="HAM1"/>
    <property type="match status" value="1"/>
</dbReference>
<dbReference type="FunFam" id="3.90.950.10:FF:000001">
    <property type="entry name" value="dITP/XTP pyrophosphatase"/>
    <property type="match status" value="1"/>
</dbReference>
<dbReference type="Gene3D" id="3.90.950.10">
    <property type="match status" value="1"/>
</dbReference>
<dbReference type="HAMAP" id="MF_01405">
    <property type="entry name" value="Non_canon_purine_NTPase"/>
    <property type="match status" value="1"/>
</dbReference>
<dbReference type="InterPro" id="IPR020922">
    <property type="entry name" value="dITP/XTP_pyrophosphatase"/>
</dbReference>
<dbReference type="InterPro" id="IPR029001">
    <property type="entry name" value="ITPase-like_fam"/>
</dbReference>
<dbReference type="InterPro" id="IPR002637">
    <property type="entry name" value="RdgB/HAM1"/>
</dbReference>
<dbReference type="PANTHER" id="PTHR11067:SF9">
    <property type="entry name" value="INOSINE TRIPHOSPHATE PYROPHOSPHATASE"/>
    <property type="match status" value="1"/>
</dbReference>
<dbReference type="PANTHER" id="PTHR11067">
    <property type="entry name" value="INOSINE TRIPHOSPHATE PYROPHOSPHATASE/HAM1 PROTEIN"/>
    <property type="match status" value="1"/>
</dbReference>
<dbReference type="Pfam" id="PF01725">
    <property type="entry name" value="Ham1p_like"/>
    <property type="match status" value="1"/>
</dbReference>
<dbReference type="SUPFAM" id="SSF52972">
    <property type="entry name" value="ITPase-like"/>
    <property type="match status" value="1"/>
</dbReference>
<accession>A1VKF6</accession>
<keyword id="KW-0378">Hydrolase</keyword>
<keyword id="KW-0460">Magnesium</keyword>
<keyword id="KW-0479">Metal-binding</keyword>
<keyword id="KW-0546">Nucleotide metabolism</keyword>
<keyword id="KW-0547">Nucleotide-binding</keyword>
<keyword id="KW-1185">Reference proteome</keyword>
<evidence type="ECO:0000255" key="1">
    <source>
        <dbReference type="HAMAP-Rule" id="MF_01405"/>
    </source>
</evidence>
<organism>
    <name type="scientific">Polaromonas naphthalenivorans (strain CJ2)</name>
    <dbReference type="NCBI Taxonomy" id="365044"/>
    <lineage>
        <taxon>Bacteria</taxon>
        <taxon>Pseudomonadati</taxon>
        <taxon>Pseudomonadota</taxon>
        <taxon>Betaproteobacteria</taxon>
        <taxon>Burkholderiales</taxon>
        <taxon>Comamonadaceae</taxon>
        <taxon>Polaromonas</taxon>
    </lineage>
</organism>
<reference key="1">
    <citation type="journal article" date="2009" name="Environ. Microbiol.">
        <title>The genome of Polaromonas naphthalenivorans strain CJ2, isolated from coal tar-contaminated sediment, reveals physiological and metabolic versatility and evolution through extensive horizontal gene transfer.</title>
        <authorList>
            <person name="Yagi J.M."/>
            <person name="Sims D."/>
            <person name="Brettin T."/>
            <person name="Bruce D."/>
            <person name="Madsen E.L."/>
        </authorList>
    </citation>
    <scope>NUCLEOTIDE SEQUENCE [LARGE SCALE GENOMIC DNA]</scope>
    <source>
        <strain>CJ2</strain>
    </source>
</reference>
<protein>
    <recommendedName>
        <fullName evidence="1">dITP/XTP pyrophosphatase</fullName>
        <ecNumber evidence="1">3.6.1.66</ecNumber>
    </recommendedName>
    <alternativeName>
        <fullName evidence="1">Non-canonical purine NTP pyrophosphatase</fullName>
    </alternativeName>
    <alternativeName>
        <fullName evidence="1">Non-standard purine NTP pyrophosphatase</fullName>
    </alternativeName>
    <alternativeName>
        <fullName evidence="1">Nucleoside-triphosphate diphosphatase</fullName>
    </alternativeName>
    <alternativeName>
        <fullName evidence="1">Nucleoside-triphosphate pyrophosphatase</fullName>
        <shortName evidence="1">NTPase</shortName>
    </alternativeName>
</protein>
<sequence>MKIVLASNNPGKLAELQALLAPLGLELLSQAELGIPEAEEPFRTFVENALAKARHASRLSGLSALADDAGLCVDAFGGLPGVDTAFYATRFGYAKGDNNNVRALLEQMAHLTQPGQRRAALVSTLVAVRSADDPEPLIASGRVAGEIALQPVGSNGFGFDPVMFIPEFAQTFAQLPVSVKNANSHRGKATAQMIALLRERWL</sequence>
<name>IXTPA_POLNA</name>